<comment type="function">
    <text evidence="1">Acts as a chaperone.</text>
</comment>
<comment type="induction">
    <text evidence="1">By stress conditions e.g. heat shock.</text>
</comment>
<comment type="similarity">
    <text evidence="1">Belongs to the heat shock protein 70 family.</text>
</comment>
<name>DNAK_BACP2</name>
<sequence length="613" mass="66114">MSKIIGIDLGTTNSCVAVLEGGEPKVIANAEGARTTPSVVAFKNGERQVGEVAKRQSITNPNTIMSVKRHMGTDYKVEVEGKNYTPQEISAIILQHLKSYAEGYLGEEVTKAVITVPAYFNDAERQATKDAGKIAGLEVERIINEPTAAALAYGLDKTDEDQTILVYDLGGGTFDVSVLELGDGVFEVRSTAGDNRLGGDDFDQVIIDHLVAEFKKENGIDLSKDKMALQRLKDAAEKAKKDLSGVSSTQISLPFITAGDAGPLHLELTLTRAKFEELSADLVERTMTPVRQSLKDAGLSASEIDKVILVGGSTRIPAVQEAIKKETGKEPHKGVNPDEVVALGAAIQGGVITGDVKDVVLLDVTPLSLGIETMGGVFTKLIERNTTIPTSKSQVFSTAADNQTAVDIHVLQGERPMAADNKTLGRFQLTDIPPAPRGVPQIEVSFDIDKNGIVNVRAKDMGTGKEQNITIKSSSGLSDDEIEKMVKEAEENAEADAKKKEEIEVRNEADQLVFTTEKTLKDLEGKIDEEQVKKANDAKDALKAAIEKGELEDIKAKKDELQTIVQELTTKLYEEAAKQAQAQQEGGAEGAQKADDNVVDAEYEEVNDDQEKK</sequence>
<dbReference type="EMBL" id="CP000813">
    <property type="protein sequence ID" value="ABV62949.1"/>
    <property type="molecule type" value="Genomic_DNA"/>
</dbReference>
<dbReference type="RefSeq" id="WP_012010629.1">
    <property type="nucleotide sequence ID" value="NZ_VEIS01000005.1"/>
</dbReference>
<dbReference type="SMR" id="A8FFD2"/>
<dbReference type="STRING" id="315750.BPUM_2280"/>
<dbReference type="GeneID" id="5621546"/>
<dbReference type="KEGG" id="bpu:BPUM_2280"/>
<dbReference type="eggNOG" id="COG0443">
    <property type="taxonomic scope" value="Bacteria"/>
</dbReference>
<dbReference type="HOGENOM" id="CLU_005965_2_4_9"/>
<dbReference type="OrthoDB" id="9766019at2"/>
<dbReference type="Proteomes" id="UP000001355">
    <property type="component" value="Chromosome"/>
</dbReference>
<dbReference type="GO" id="GO:0005524">
    <property type="term" value="F:ATP binding"/>
    <property type="evidence" value="ECO:0007669"/>
    <property type="project" value="UniProtKB-UniRule"/>
</dbReference>
<dbReference type="GO" id="GO:0140662">
    <property type="term" value="F:ATP-dependent protein folding chaperone"/>
    <property type="evidence" value="ECO:0007669"/>
    <property type="project" value="InterPro"/>
</dbReference>
<dbReference type="GO" id="GO:0051082">
    <property type="term" value="F:unfolded protein binding"/>
    <property type="evidence" value="ECO:0007669"/>
    <property type="project" value="InterPro"/>
</dbReference>
<dbReference type="CDD" id="cd10234">
    <property type="entry name" value="ASKHA_NBD_HSP70_DnaK-like"/>
    <property type="match status" value="1"/>
</dbReference>
<dbReference type="FunFam" id="2.60.34.10:FF:000014">
    <property type="entry name" value="Chaperone protein DnaK HSP70"/>
    <property type="match status" value="1"/>
</dbReference>
<dbReference type="FunFam" id="1.20.1270.10:FF:000001">
    <property type="entry name" value="Molecular chaperone DnaK"/>
    <property type="match status" value="1"/>
</dbReference>
<dbReference type="FunFam" id="3.30.420.40:FF:000071">
    <property type="entry name" value="Molecular chaperone DnaK"/>
    <property type="match status" value="1"/>
</dbReference>
<dbReference type="FunFam" id="3.90.640.10:FF:000003">
    <property type="entry name" value="Molecular chaperone DnaK"/>
    <property type="match status" value="1"/>
</dbReference>
<dbReference type="Gene3D" id="1.20.1270.10">
    <property type="match status" value="1"/>
</dbReference>
<dbReference type="Gene3D" id="3.30.420.40">
    <property type="match status" value="2"/>
</dbReference>
<dbReference type="Gene3D" id="3.90.640.10">
    <property type="entry name" value="Actin, Chain A, domain 4"/>
    <property type="match status" value="1"/>
</dbReference>
<dbReference type="Gene3D" id="2.60.34.10">
    <property type="entry name" value="Substrate Binding Domain Of DNAk, Chain A, domain 1"/>
    <property type="match status" value="1"/>
</dbReference>
<dbReference type="HAMAP" id="MF_00332">
    <property type="entry name" value="DnaK"/>
    <property type="match status" value="1"/>
</dbReference>
<dbReference type="InterPro" id="IPR043129">
    <property type="entry name" value="ATPase_NBD"/>
</dbReference>
<dbReference type="InterPro" id="IPR012725">
    <property type="entry name" value="Chaperone_DnaK"/>
</dbReference>
<dbReference type="InterPro" id="IPR018181">
    <property type="entry name" value="Heat_shock_70_CS"/>
</dbReference>
<dbReference type="InterPro" id="IPR029048">
    <property type="entry name" value="HSP70_C_sf"/>
</dbReference>
<dbReference type="InterPro" id="IPR029047">
    <property type="entry name" value="HSP70_peptide-bd_sf"/>
</dbReference>
<dbReference type="InterPro" id="IPR013126">
    <property type="entry name" value="Hsp_70_fam"/>
</dbReference>
<dbReference type="NCBIfam" id="NF001413">
    <property type="entry name" value="PRK00290.1"/>
    <property type="match status" value="1"/>
</dbReference>
<dbReference type="NCBIfam" id="TIGR02350">
    <property type="entry name" value="prok_dnaK"/>
    <property type="match status" value="1"/>
</dbReference>
<dbReference type="PANTHER" id="PTHR19375">
    <property type="entry name" value="HEAT SHOCK PROTEIN 70KDA"/>
    <property type="match status" value="1"/>
</dbReference>
<dbReference type="Pfam" id="PF00012">
    <property type="entry name" value="HSP70"/>
    <property type="match status" value="1"/>
</dbReference>
<dbReference type="PRINTS" id="PR00301">
    <property type="entry name" value="HEATSHOCK70"/>
</dbReference>
<dbReference type="SUPFAM" id="SSF53067">
    <property type="entry name" value="Actin-like ATPase domain"/>
    <property type="match status" value="2"/>
</dbReference>
<dbReference type="SUPFAM" id="SSF100934">
    <property type="entry name" value="Heat shock protein 70kD (HSP70), C-terminal subdomain"/>
    <property type="match status" value="1"/>
</dbReference>
<dbReference type="SUPFAM" id="SSF100920">
    <property type="entry name" value="Heat shock protein 70kD (HSP70), peptide-binding domain"/>
    <property type="match status" value="1"/>
</dbReference>
<dbReference type="PROSITE" id="PS00297">
    <property type="entry name" value="HSP70_1"/>
    <property type="match status" value="1"/>
</dbReference>
<dbReference type="PROSITE" id="PS00329">
    <property type="entry name" value="HSP70_2"/>
    <property type="match status" value="1"/>
</dbReference>
<dbReference type="PROSITE" id="PS01036">
    <property type="entry name" value="HSP70_3"/>
    <property type="match status" value="1"/>
</dbReference>
<reference key="1">
    <citation type="journal article" date="2007" name="PLoS ONE">
        <title>Paradoxical DNA repair and peroxide resistance gene conservation in Bacillus pumilus SAFR-032.</title>
        <authorList>
            <person name="Gioia J."/>
            <person name="Yerrapragada S."/>
            <person name="Qin X."/>
            <person name="Jiang H."/>
            <person name="Igboeli O.C."/>
            <person name="Muzny D."/>
            <person name="Dugan-Rocha S."/>
            <person name="Ding Y."/>
            <person name="Hawes A."/>
            <person name="Liu W."/>
            <person name="Perez L."/>
            <person name="Kovar C."/>
            <person name="Dinh H."/>
            <person name="Lee S."/>
            <person name="Nazareth L."/>
            <person name="Blyth P."/>
            <person name="Holder M."/>
            <person name="Buhay C."/>
            <person name="Tirumalai M.R."/>
            <person name="Liu Y."/>
            <person name="Dasgupta I."/>
            <person name="Bokhetache L."/>
            <person name="Fujita M."/>
            <person name="Karouia F."/>
            <person name="Eswara Moorthy P."/>
            <person name="Siefert J."/>
            <person name="Uzman A."/>
            <person name="Buzumbo P."/>
            <person name="Verma A."/>
            <person name="Zwiya H."/>
            <person name="McWilliams B.D."/>
            <person name="Olowu A."/>
            <person name="Clinkenbeard K.D."/>
            <person name="Newcombe D."/>
            <person name="Golebiewski L."/>
            <person name="Petrosino J.F."/>
            <person name="Nicholson W.L."/>
            <person name="Fox G.E."/>
            <person name="Venkateswaran K."/>
            <person name="Highlander S.K."/>
            <person name="Weinstock G.M."/>
        </authorList>
    </citation>
    <scope>NUCLEOTIDE SEQUENCE [LARGE SCALE GENOMIC DNA]</scope>
    <source>
        <strain>SAFR-032</strain>
    </source>
</reference>
<evidence type="ECO:0000255" key="1">
    <source>
        <dbReference type="HAMAP-Rule" id="MF_00332"/>
    </source>
</evidence>
<evidence type="ECO:0000256" key="2">
    <source>
        <dbReference type="SAM" id="MobiDB-lite"/>
    </source>
</evidence>
<keyword id="KW-0067">ATP-binding</keyword>
<keyword id="KW-0143">Chaperone</keyword>
<keyword id="KW-0547">Nucleotide-binding</keyword>
<keyword id="KW-0597">Phosphoprotein</keyword>
<keyword id="KW-0346">Stress response</keyword>
<feature type="chain" id="PRO_1000059510" description="Chaperone protein DnaK">
    <location>
        <begin position="1"/>
        <end position="613"/>
    </location>
</feature>
<feature type="region of interest" description="Disordered" evidence="2">
    <location>
        <begin position="577"/>
        <end position="613"/>
    </location>
</feature>
<feature type="compositionally biased region" description="Acidic residues" evidence="2">
    <location>
        <begin position="597"/>
        <end position="613"/>
    </location>
</feature>
<feature type="modified residue" description="Phosphothreonine; by autocatalysis" evidence="1">
    <location>
        <position position="173"/>
    </location>
</feature>
<accession>A8FFD2</accession>
<gene>
    <name evidence="1" type="primary">dnaK</name>
    <name type="ordered locus">BPUM_2280</name>
</gene>
<protein>
    <recommendedName>
        <fullName evidence="1">Chaperone protein DnaK</fullName>
    </recommendedName>
    <alternativeName>
        <fullName evidence="1">HSP70</fullName>
    </alternativeName>
    <alternativeName>
        <fullName evidence="1">Heat shock 70 kDa protein</fullName>
    </alternativeName>
    <alternativeName>
        <fullName evidence="1">Heat shock protein 70</fullName>
    </alternativeName>
</protein>
<proteinExistence type="inferred from homology"/>
<organism>
    <name type="scientific">Bacillus pumilus (strain SAFR-032)</name>
    <dbReference type="NCBI Taxonomy" id="315750"/>
    <lineage>
        <taxon>Bacteria</taxon>
        <taxon>Bacillati</taxon>
        <taxon>Bacillota</taxon>
        <taxon>Bacilli</taxon>
        <taxon>Bacillales</taxon>
        <taxon>Bacillaceae</taxon>
        <taxon>Bacillus</taxon>
    </lineage>
</organism>